<evidence type="ECO:0000255" key="1">
    <source>
        <dbReference type="HAMAP-Rule" id="MF_01543"/>
    </source>
</evidence>
<keyword id="KW-0067">ATP-binding</keyword>
<keyword id="KW-0436">Ligase</keyword>
<keyword id="KW-0547">Nucleotide-binding</keyword>
<keyword id="KW-0554">One-carbon metabolism</keyword>
<reference key="1">
    <citation type="journal article" date="2004" name="Nat. Biotechnol.">
        <title>The genome sequence of the extreme thermophile Thermus thermophilus.</title>
        <authorList>
            <person name="Henne A."/>
            <person name="Brueggemann H."/>
            <person name="Raasch C."/>
            <person name="Wiezer A."/>
            <person name="Hartsch T."/>
            <person name="Liesegang H."/>
            <person name="Johann A."/>
            <person name="Lienard T."/>
            <person name="Gohl O."/>
            <person name="Martinez-Arias R."/>
            <person name="Jacobi C."/>
            <person name="Starkuviene V."/>
            <person name="Schlenczeck S."/>
            <person name="Dencker S."/>
            <person name="Huber R."/>
            <person name="Klenk H.-P."/>
            <person name="Kramer W."/>
            <person name="Merkl R."/>
            <person name="Gottschalk G."/>
            <person name="Fritz H.-J."/>
        </authorList>
    </citation>
    <scope>NUCLEOTIDE SEQUENCE [LARGE SCALE GENOMIC DNA]</scope>
    <source>
        <strain>ATCC BAA-163 / DSM 7039 / HB27</strain>
    </source>
</reference>
<dbReference type="EC" id="6.3.4.3" evidence="1"/>
<dbReference type="EMBL" id="AE017221">
    <property type="protein sequence ID" value="AAS82049.1"/>
    <property type="molecule type" value="Genomic_DNA"/>
</dbReference>
<dbReference type="RefSeq" id="WP_011174070.1">
    <property type="nucleotide sequence ID" value="NC_005835.1"/>
</dbReference>
<dbReference type="SMR" id="Q72GY9"/>
<dbReference type="KEGG" id="tth:TT_C1707"/>
<dbReference type="eggNOG" id="COG2759">
    <property type="taxonomic scope" value="Bacteria"/>
</dbReference>
<dbReference type="HOGENOM" id="CLU_003601_3_3_0"/>
<dbReference type="OrthoDB" id="9761733at2"/>
<dbReference type="UniPathway" id="UPA00193"/>
<dbReference type="Proteomes" id="UP000000592">
    <property type="component" value="Chromosome"/>
</dbReference>
<dbReference type="GO" id="GO:0005524">
    <property type="term" value="F:ATP binding"/>
    <property type="evidence" value="ECO:0007669"/>
    <property type="project" value="UniProtKB-UniRule"/>
</dbReference>
<dbReference type="GO" id="GO:0004329">
    <property type="term" value="F:formate-tetrahydrofolate ligase activity"/>
    <property type="evidence" value="ECO:0007669"/>
    <property type="project" value="UniProtKB-UniRule"/>
</dbReference>
<dbReference type="GO" id="GO:0035999">
    <property type="term" value="P:tetrahydrofolate interconversion"/>
    <property type="evidence" value="ECO:0007669"/>
    <property type="project" value="UniProtKB-UniRule"/>
</dbReference>
<dbReference type="CDD" id="cd00477">
    <property type="entry name" value="FTHFS"/>
    <property type="match status" value="1"/>
</dbReference>
<dbReference type="FunFam" id="3.30.1510.10:FF:000001">
    <property type="entry name" value="Formate--tetrahydrofolate ligase"/>
    <property type="match status" value="1"/>
</dbReference>
<dbReference type="Gene3D" id="3.30.1510.10">
    <property type="entry name" value="Domain 2, N(10)-formyltetrahydrofolate synthetase"/>
    <property type="match status" value="1"/>
</dbReference>
<dbReference type="Gene3D" id="3.10.410.10">
    <property type="entry name" value="Formyltetrahydrofolate synthetase, domain 3"/>
    <property type="match status" value="1"/>
</dbReference>
<dbReference type="Gene3D" id="3.40.50.300">
    <property type="entry name" value="P-loop containing nucleotide triphosphate hydrolases"/>
    <property type="match status" value="1"/>
</dbReference>
<dbReference type="HAMAP" id="MF_01543">
    <property type="entry name" value="FTHFS"/>
    <property type="match status" value="1"/>
</dbReference>
<dbReference type="InterPro" id="IPR000559">
    <property type="entry name" value="Formate_THF_ligase"/>
</dbReference>
<dbReference type="InterPro" id="IPR020628">
    <property type="entry name" value="Formate_THF_ligase_CS"/>
</dbReference>
<dbReference type="InterPro" id="IPR027417">
    <property type="entry name" value="P-loop_NTPase"/>
</dbReference>
<dbReference type="NCBIfam" id="NF010030">
    <property type="entry name" value="PRK13505.1"/>
    <property type="match status" value="1"/>
</dbReference>
<dbReference type="Pfam" id="PF01268">
    <property type="entry name" value="FTHFS"/>
    <property type="match status" value="1"/>
</dbReference>
<dbReference type="SUPFAM" id="SSF52540">
    <property type="entry name" value="P-loop containing nucleoside triphosphate hydrolases"/>
    <property type="match status" value="1"/>
</dbReference>
<dbReference type="PROSITE" id="PS00721">
    <property type="entry name" value="FTHFS_1"/>
    <property type="match status" value="1"/>
</dbReference>
<dbReference type="PROSITE" id="PS00722">
    <property type="entry name" value="FTHFS_2"/>
    <property type="match status" value="1"/>
</dbReference>
<protein>
    <recommendedName>
        <fullName evidence="1">Formate--tetrahydrofolate ligase</fullName>
        <ecNumber evidence="1">6.3.4.3</ecNumber>
    </recommendedName>
    <alternativeName>
        <fullName evidence="1">Formyltetrahydrofolate synthetase</fullName>
        <shortName evidence="1">FHS</shortName>
        <shortName evidence="1">FTHFS</shortName>
    </alternativeName>
</protein>
<gene>
    <name evidence="1" type="primary">fhs</name>
    <name type="ordered locus">TT_C1707</name>
</gene>
<proteinExistence type="inferred from homology"/>
<accession>Q72GY9</accession>
<organism>
    <name type="scientific">Thermus thermophilus (strain ATCC BAA-163 / DSM 7039 / HB27)</name>
    <dbReference type="NCBI Taxonomy" id="262724"/>
    <lineage>
        <taxon>Bacteria</taxon>
        <taxon>Thermotogati</taxon>
        <taxon>Deinococcota</taxon>
        <taxon>Deinococci</taxon>
        <taxon>Thermales</taxon>
        <taxon>Thermaceae</taxon>
        <taxon>Thermus</taxon>
    </lineage>
</organism>
<name>FTHS_THET2</name>
<sequence>MIVKEDLLPIEEVAAKLGLDRDRLYLYGPHMAKVLGEPPKAKGKLVLVTAITPTPAGEGKTTTAIGLVDALWRLGKRAALALREPSLGPVFGVKGGATGGGKARVEPRHEINLHFTGDFHAVTSAVNLLNALLDNHLHQGNELGIDPRRIELKRAIDMNDRALRHIVLGLGGKAHGVPREGGFELTVASEVMALMSLARDFQDLKRRLGRMRVAFTHEGKPVYAEDLMAVGAMAALLRQAFLPNLVQTAEGNPAFIHMGPFGNIAHGTNSLRASLFALGLADLVVQEAGFATDLGLEKFMNVVARTTGLVPEAVVLVATIRALRYHGGQDAYGMPDPKAVKAGLANLEKHVENVELFGYKPVIALNRFPSDAPEEIALVRAFAEERGLPFAPSEVYAQGGEGGLELAERVLEALDLPHAYRPLYPLEASLEAKVEAIATRVYGAEGVEWSEEAKRALKAAKKEGCEALPVVVAKAATSLSDNPRLRGRPRGFTVRVTDLRCRLGAGFVVVYMGGIETLPGLPKTPQAFGIDVDEEGNIRGMDY</sequence>
<comment type="catalytic activity">
    <reaction evidence="1">
        <text>(6S)-5,6,7,8-tetrahydrofolate + formate + ATP = (6R)-10-formyltetrahydrofolate + ADP + phosphate</text>
        <dbReference type="Rhea" id="RHEA:20221"/>
        <dbReference type="ChEBI" id="CHEBI:15740"/>
        <dbReference type="ChEBI" id="CHEBI:30616"/>
        <dbReference type="ChEBI" id="CHEBI:43474"/>
        <dbReference type="ChEBI" id="CHEBI:57453"/>
        <dbReference type="ChEBI" id="CHEBI:195366"/>
        <dbReference type="ChEBI" id="CHEBI:456216"/>
        <dbReference type="EC" id="6.3.4.3"/>
    </reaction>
</comment>
<comment type="pathway">
    <text evidence="1">One-carbon metabolism; tetrahydrofolate interconversion.</text>
</comment>
<comment type="similarity">
    <text evidence="1">Belongs to the formate--tetrahydrofolate ligase family.</text>
</comment>
<feature type="chain" id="PRO_0000199404" description="Formate--tetrahydrofolate ligase">
    <location>
        <begin position="1"/>
        <end position="543"/>
    </location>
</feature>
<feature type="binding site" evidence="1">
    <location>
        <begin position="54"/>
        <end position="61"/>
    </location>
    <ligand>
        <name>ATP</name>
        <dbReference type="ChEBI" id="CHEBI:30616"/>
    </ligand>
</feature>